<dbReference type="EC" id="2.1.1.192" evidence="1"/>
<dbReference type="EMBL" id="CP001056">
    <property type="protein sequence ID" value="ACD22306.1"/>
    <property type="molecule type" value="Genomic_DNA"/>
</dbReference>
<dbReference type="SMR" id="B2THS9"/>
<dbReference type="KEGG" id="cbk:CLL_A1219"/>
<dbReference type="PATRIC" id="fig|935198.13.peg.1164"/>
<dbReference type="HOGENOM" id="CLU_029101_0_1_9"/>
<dbReference type="Proteomes" id="UP000001195">
    <property type="component" value="Chromosome"/>
</dbReference>
<dbReference type="GO" id="GO:0005737">
    <property type="term" value="C:cytoplasm"/>
    <property type="evidence" value="ECO:0007669"/>
    <property type="project" value="UniProtKB-SubCell"/>
</dbReference>
<dbReference type="GO" id="GO:0051539">
    <property type="term" value="F:4 iron, 4 sulfur cluster binding"/>
    <property type="evidence" value="ECO:0007669"/>
    <property type="project" value="UniProtKB-UniRule"/>
</dbReference>
<dbReference type="GO" id="GO:0046872">
    <property type="term" value="F:metal ion binding"/>
    <property type="evidence" value="ECO:0007669"/>
    <property type="project" value="UniProtKB-KW"/>
</dbReference>
<dbReference type="GO" id="GO:0070040">
    <property type="term" value="F:rRNA (adenine(2503)-C2-)-methyltransferase activity"/>
    <property type="evidence" value="ECO:0007669"/>
    <property type="project" value="UniProtKB-UniRule"/>
</dbReference>
<dbReference type="GO" id="GO:0019843">
    <property type="term" value="F:rRNA binding"/>
    <property type="evidence" value="ECO:0007669"/>
    <property type="project" value="UniProtKB-UniRule"/>
</dbReference>
<dbReference type="GO" id="GO:0002935">
    <property type="term" value="F:tRNA (adenine(37)-C2)-methyltransferase activity"/>
    <property type="evidence" value="ECO:0007669"/>
    <property type="project" value="UniProtKB-UniRule"/>
</dbReference>
<dbReference type="GO" id="GO:0000049">
    <property type="term" value="F:tRNA binding"/>
    <property type="evidence" value="ECO:0007669"/>
    <property type="project" value="UniProtKB-UniRule"/>
</dbReference>
<dbReference type="GO" id="GO:0070475">
    <property type="term" value="P:rRNA base methylation"/>
    <property type="evidence" value="ECO:0007669"/>
    <property type="project" value="UniProtKB-UniRule"/>
</dbReference>
<dbReference type="GO" id="GO:0030488">
    <property type="term" value="P:tRNA methylation"/>
    <property type="evidence" value="ECO:0007669"/>
    <property type="project" value="UniProtKB-UniRule"/>
</dbReference>
<dbReference type="CDD" id="cd01335">
    <property type="entry name" value="Radical_SAM"/>
    <property type="match status" value="1"/>
</dbReference>
<dbReference type="FunFam" id="3.20.20.70:FF:000014">
    <property type="entry name" value="Probable dual-specificity RNA methyltransferase RlmN"/>
    <property type="match status" value="1"/>
</dbReference>
<dbReference type="Gene3D" id="1.10.150.530">
    <property type="match status" value="1"/>
</dbReference>
<dbReference type="Gene3D" id="3.20.20.70">
    <property type="entry name" value="Aldolase class I"/>
    <property type="match status" value="1"/>
</dbReference>
<dbReference type="HAMAP" id="MF_01849">
    <property type="entry name" value="RNA_methyltr_RlmN"/>
    <property type="match status" value="1"/>
</dbReference>
<dbReference type="InterPro" id="IPR013785">
    <property type="entry name" value="Aldolase_TIM"/>
</dbReference>
<dbReference type="InterPro" id="IPR040072">
    <property type="entry name" value="Methyltransferase_A"/>
</dbReference>
<dbReference type="InterPro" id="IPR048641">
    <property type="entry name" value="RlmN_N"/>
</dbReference>
<dbReference type="InterPro" id="IPR027492">
    <property type="entry name" value="RNA_MTrfase_RlmN"/>
</dbReference>
<dbReference type="InterPro" id="IPR004383">
    <property type="entry name" value="rRNA_lsu_MTrfase_RlmN/Cfr"/>
</dbReference>
<dbReference type="InterPro" id="IPR007197">
    <property type="entry name" value="rSAM"/>
</dbReference>
<dbReference type="NCBIfam" id="TIGR00048">
    <property type="entry name" value="rRNA_mod_RlmN"/>
    <property type="match status" value="1"/>
</dbReference>
<dbReference type="PANTHER" id="PTHR30544">
    <property type="entry name" value="23S RRNA METHYLTRANSFERASE"/>
    <property type="match status" value="1"/>
</dbReference>
<dbReference type="PANTHER" id="PTHR30544:SF5">
    <property type="entry name" value="RADICAL SAM CORE DOMAIN-CONTAINING PROTEIN"/>
    <property type="match status" value="1"/>
</dbReference>
<dbReference type="Pfam" id="PF04055">
    <property type="entry name" value="Radical_SAM"/>
    <property type="match status" value="1"/>
</dbReference>
<dbReference type="Pfam" id="PF21016">
    <property type="entry name" value="RlmN_N"/>
    <property type="match status" value="1"/>
</dbReference>
<dbReference type="PIRSF" id="PIRSF006004">
    <property type="entry name" value="CHP00048"/>
    <property type="match status" value="1"/>
</dbReference>
<dbReference type="SFLD" id="SFLDF00275">
    <property type="entry name" value="adenosine_C2_methyltransferase"/>
    <property type="match status" value="1"/>
</dbReference>
<dbReference type="SFLD" id="SFLDG01062">
    <property type="entry name" value="methyltransferase_(Class_A)"/>
    <property type="match status" value="1"/>
</dbReference>
<dbReference type="SUPFAM" id="SSF102114">
    <property type="entry name" value="Radical SAM enzymes"/>
    <property type="match status" value="1"/>
</dbReference>
<dbReference type="PROSITE" id="PS51918">
    <property type="entry name" value="RADICAL_SAM"/>
    <property type="match status" value="1"/>
</dbReference>
<protein>
    <recommendedName>
        <fullName evidence="1">Probable dual-specificity RNA methyltransferase RlmN</fullName>
        <ecNumber evidence="1">2.1.1.192</ecNumber>
    </recommendedName>
    <alternativeName>
        <fullName evidence="1">23S rRNA (adenine(2503)-C(2))-methyltransferase</fullName>
    </alternativeName>
    <alternativeName>
        <fullName evidence="1">23S rRNA m2A2503 methyltransferase</fullName>
    </alternativeName>
    <alternativeName>
        <fullName evidence="1">Ribosomal RNA large subunit methyltransferase N</fullName>
    </alternativeName>
    <alternativeName>
        <fullName evidence="1">tRNA (adenine(37)-C(2))-methyltransferase</fullName>
    </alternativeName>
    <alternativeName>
        <fullName evidence="1">tRNA m2A37 methyltransferase</fullName>
    </alternativeName>
</protein>
<gene>
    <name evidence="1" type="primary">rlmN</name>
    <name type="ordered locus">CLL_A1219</name>
</gene>
<accession>B2THS9</accession>
<name>RLMN_CLOBB</name>
<feature type="chain" id="PRO_0000350115" description="Probable dual-specificity RNA methyltransferase RlmN">
    <location>
        <begin position="1"/>
        <end position="347"/>
    </location>
</feature>
<feature type="domain" description="Radical SAM core" evidence="2">
    <location>
        <begin position="96"/>
        <end position="326"/>
    </location>
</feature>
<feature type="active site" description="Proton acceptor" evidence="1">
    <location>
        <position position="90"/>
    </location>
</feature>
<feature type="active site" description="S-methylcysteine intermediate" evidence="1">
    <location>
        <position position="331"/>
    </location>
</feature>
<feature type="binding site" evidence="1">
    <location>
        <position position="110"/>
    </location>
    <ligand>
        <name>[4Fe-4S] cluster</name>
        <dbReference type="ChEBI" id="CHEBI:49883"/>
        <note>4Fe-4S-S-AdoMet</note>
    </ligand>
</feature>
<feature type="binding site" evidence="1">
    <location>
        <position position="114"/>
    </location>
    <ligand>
        <name>[4Fe-4S] cluster</name>
        <dbReference type="ChEBI" id="CHEBI:49883"/>
        <note>4Fe-4S-S-AdoMet</note>
    </ligand>
</feature>
<feature type="binding site" evidence="1">
    <location>
        <position position="117"/>
    </location>
    <ligand>
        <name>[4Fe-4S] cluster</name>
        <dbReference type="ChEBI" id="CHEBI:49883"/>
        <note>4Fe-4S-S-AdoMet</note>
    </ligand>
</feature>
<feature type="binding site" evidence="1">
    <location>
        <begin position="157"/>
        <end position="158"/>
    </location>
    <ligand>
        <name>S-adenosyl-L-methionine</name>
        <dbReference type="ChEBI" id="CHEBI:59789"/>
    </ligand>
</feature>
<feature type="binding site" evidence="1">
    <location>
        <position position="189"/>
    </location>
    <ligand>
        <name>S-adenosyl-L-methionine</name>
        <dbReference type="ChEBI" id="CHEBI:59789"/>
    </ligand>
</feature>
<feature type="binding site" evidence="1">
    <location>
        <begin position="212"/>
        <end position="214"/>
    </location>
    <ligand>
        <name>S-adenosyl-L-methionine</name>
        <dbReference type="ChEBI" id="CHEBI:59789"/>
    </ligand>
</feature>
<feature type="binding site" evidence="1">
    <location>
        <position position="288"/>
    </location>
    <ligand>
        <name>S-adenosyl-L-methionine</name>
        <dbReference type="ChEBI" id="CHEBI:59789"/>
    </ligand>
</feature>
<feature type="disulfide bond" description="(transient)" evidence="1">
    <location>
        <begin position="103"/>
        <end position="331"/>
    </location>
</feature>
<keyword id="KW-0004">4Fe-4S</keyword>
<keyword id="KW-0963">Cytoplasm</keyword>
<keyword id="KW-1015">Disulfide bond</keyword>
<keyword id="KW-0408">Iron</keyword>
<keyword id="KW-0411">Iron-sulfur</keyword>
<keyword id="KW-0479">Metal-binding</keyword>
<keyword id="KW-0489">Methyltransferase</keyword>
<keyword id="KW-0698">rRNA processing</keyword>
<keyword id="KW-0949">S-adenosyl-L-methionine</keyword>
<keyword id="KW-0808">Transferase</keyword>
<keyword id="KW-0819">tRNA processing</keyword>
<organism>
    <name type="scientific">Clostridium botulinum (strain Eklund 17B / Type B)</name>
    <dbReference type="NCBI Taxonomy" id="935198"/>
    <lineage>
        <taxon>Bacteria</taxon>
        <taxon>Bacillati</taxon>
        <taxon>Bacillota</taxon>
        <taxon>Clostridia</taxon>
        <taxon>Eubacteriales</taxon>
        <taxon>Clostridiaceae</taxon>
        <taxon>Clostridium</taxon>
    </lineage>
</organism>
<comment type="function">
    <text evidence="1">Specifically methylates position 2 of adenine 2503 in 23S rRNA and position 2 of adenine 37 in tRNAs.</text>
</comment>
<comment type="catalytic activity">
    <reaction evidence="1">
        <text>adenosine(2503) in 23S rRNA + 2 reduced [2Fe-2S]-[ferredoxin] + 2 S-adenosyl-L-methionine = 2-methyladenosine(2503) in 23S rRNA + 5'-deoxyadenosine + L-methionine + 2 oxidized [2Fe-2S]-[ferredoxin] + S-adenosyl-L-homocysteine</text>
        <dbReference type="Rhea" id="RHEA:42916"/>
        <dbReference type="Rhea" id="RHEA-COMP:10000"/>
        <dbReference type="Rhea" id="RHEA-COMP:10001"/>
        <dbReference type="Rhea" id="RHEA-COMP:10152"/>
        <dbReference type="Rhea" id="RHEA-COMP:10282"/>
        <dbReference type="ChEBI" id="CHEBI:17319"/>
        <dbReference type="ChEBI" id="CHEBI:33737"/>
        <dbReference type="ChEBI" id="CHEBI:33738"/>
        <dbReference type="ChEBI" id="CHEBI:57844"/>
        <dbReference type="ChEBI" id="CHEBI:57856"/>
        <dbReference type="ChEBI" id="CHEBI:59789"/>
        <dbReference type="ChEBI" id="CHEBI:74411"/>
        <dbReference type="ChEBI" id="CHEBI:74497"/>
        <dbReference type="EC" id="2.1.1.192"/>
    </reaction>
</comment>
<comment type="catalytic activity">
    <reaction evidence="1">
        <text>adenosine(37) in tRNA + 2 reduced [2Fe-2S]-[ferredoxin] + 2 S-adenosyl-L-methionine = 2-methyladenosine(37) in tRNA + 5'-deoxyadenosine + L-methionine + 2 oxidized [2Fe-2S]-[ferredoxin] + S-adenosyl-L-homocysteine</text>
        <dbReference type="Rhea" id="RHEA:43332"/>
        <dbReference type="Rhea" id="RHEA-COMP:10000"/>
        <dbReference type="Rhea" id="RHEA-COMP:10001"/>
        <dbReference type="Rhea" id="RHEA-COMP:10162"/>
        <dbReference type="Rhea" id="RHEA-COMP:10485"/>
        <dbReference type="ChEBI" id="CHEBI:17319"/>
        <dbReference type="ChEBI" id="CHEBI:33737"/>
        <dbReference type="ChEBI" id="CHEBI:33738"/>
        <dbReference type="ChEBI" id="CHEBI:57844"/>
        <dbReference type="ChEBI" id="CHEBI:57856"/>
        <dbReference type="ChEBI" id="CHEBI:59789"/>
        <dbReference type="ChEBI" id="CHEBI:74411"/>
        <dbReference type="ChEBI" id="CHEBI:74497"/>
        <dbReference type="EC" id="2.1.1.192"/>
    </reaction>
</comment>
<comment type="cofactor">
    <cofactor evidence="1">
        <name>[4Fe-4S] cluster</name>
        <dbReference type="ChEBI" id="CHEBI:49883"/>
    </cofactor>
    <text evidence="1">Binds 1 [4Fe-4S] cluster. The cluster is coordinated with 3 cysteines and an exchangeable S-adenosyl-L-methionine.</text>
</comment>
<comment type="subcellular location">
    <subcellularLocation>
        <location evidence="1">Cytoplasm</location>
    </subcellularLocation>
</comment>
<comment type="miscellaneous">
    <text evidence="1">Reaction proceeds by a ping-pong mechanism involving intermediate methylation of a conserved cysteine residue.</text>
</comment>
<comment type="similarity">
    <text evidence="1">Belongs to the radical SAM superfamily. RlmN family.</text>
</comment>
<reference key="1">
    <citation type="submission" date="2008-04" db="EMBL/GenBank/DDBJ databases">
        <title>Complete sequence of Clostridium botulinum strain Eklund.</title>
        <authorList>
            <person name="Brinkac L.M."/>
            <person name="Brown J.L."/>
            <person name="Bruce D."/>
            <person name="Detter C."/>
            <person name="Munk C."/>
            <person name="Smith L.A."/>
            <person name="Smith T.J."/>
            <person name="Sutton G."/>
            <person name="Brettin T.S."/>
        </authorList>
    </citation>
    <scope>NUCLEOTIDE SEQUENCE [LARGE SCALE GENOMIC DNA]</scope>
    <source>
        <strain>Eklund 17B / Type B</strain>
    </source>
</reference>
<evidence type="ECO:0000255" key="1">
    <source>
        <dbReference type="HAMAP-Rule" id="MF_01849"/>
    </source>
</evidence>
<evidence type="ECO:0000255" key="2">
    <source>
        <dbReference type="PROSITE-ProRule" id="PRU01266"/>
    </source>
</evidence>
<sequence>MKNILDYTLEELTLWMKENNESSFRAKQIMSWIYKDVRNFSDMRNMPKSLIAKLEENFEIALPEIEEIYKSELDGTEKFLFKFSDGNLIESVLMRYKHGNSICISTQVGCRMGCKFCASTIDGRIRNLTTGEILAQILVVQNHIGERISNVVLMGSGEPLDNYENVMKFLDIVSAEYGLNIGQRHITLSTCGIVPKIYELADKELSITLAISLHAFSDEKRKEIMPIANKYSIDEILNACKYFVNKTKRRITFEYSLVKDVNDSKEDARALGKLLKGMLCHVNLIPVNEIKERTFKRSSKETIQDFANILSNLGIEVTVRREMGSDINAACGQLRRSYIKTQETRGE</sequence>
<proteinExistence type="inferred from homology"/>